<organism>
    <name type="scientific">Aspergillus fumigatus (strain ATCC MYA-4609 / CBS 101355 / FGSC A1100 / Af293)</name>
    <name type="common">Neosartorya fumigata</name>
    <dbReference type="NCBI Taxonomy" id="330879"/>
    <lineage>
        <taxon>Eukaryota</taxon>
        <taxon>Fungi</taxon>
        <taxon>Dikarya</taxon>
        <taxon>Ascomycota</taxon>
        <taxon>Pezizomycotina</taxon>
        <taxon>Eurotiomycetes</taxon>
        <taxon>Eurotiomycetidae</taxon>
        <taxon>Eurotiales</taxon>
        <taxon>Aspergillaceae</taxon>
        <taxon>Aspergillus</taxon>
        <taxon>Aspergillus subgen. Fumigati</taxon>
    </lineage>
</organism>
<feature type="chain" id="PRO_0000303164" description="Mediator of RNA polymerase II transcription subunit 10">
    <location>
        <begin position="1"/>
        <end position="159"/>
    </location>
</feature>
<feature type="region of interest" description="Disordered" evidence="2">
    <location>
        <begin position="54"/>
        <end position="77"/>
    </location>
</feature>
<sequence length="159" mass="17714">MAPVTLSTVDDDLKEVIQHLFEIQSAVHGYLGPETQTELVRKIKNLTLALSTLSTHTKPQPPSQDDEQKGSANDPLLRDIQLPPEIIDYVDAARNPDIYTREFVELVQRGNQDLKGKKEAFASFRDVLAREMRSAMPECRGEVERVLAATGGARADTEQ</sequence>
<comment type="function">
    <text evidence="1">Component of the Mediator complex, a coactivator involved in the regulated transcription of nearly all RNA polymerase II-dependent genes. Mediator functions as a bridge to convey information from gene-specific regulatory proteins to the basal RNA polymerase II transcription machinery. Mediator is recruited to promoters by direct interactions with regulatory proteins and serves as a scaffold for the assembly of a functional preinitiation complex with RNA polymerase II and the general transcription factors (By similarity).</text>
</comment>
<comment type="subunit">
    <text evidence="1">Component of the Mediator complex.</text>
</comment>
<comment type="subcellular location">
    <subcellularLocation>
        <location evidence="1">Nucleus</location>
    </subcellularLocation>
</comment>
<comment type="similarity">
    <text evidence="3">Belongs to the Mediator complex subunit 10 family.</text>
</comment>
<dbReference type="EMBL" id="AAHF01000007">
    <property type="protein sequence ID" value="EAL88306.1"/>
    <property type="molecule type" value="Genomic_DNA"/>
</dbReference>
<dbReference type="RefSeq" id="XP_750344.1">
    <property type="nucleotide sequence ID" value="XM_745251.1"/>
</dbReference>
<dbReference type="SMR" id="Q4WJH6"/>
<dbReference type="FunCoup" id="Q4WJH6">
    <property type="interactions" value="561"/>
</dbReference>
<dbReference type="STRING" id="330879.Q4WJH6"/>
<dbReference type="EnsemblFungi" id="EAL88306">
    <property type="protein sequence ID" value="EAL88306"/>
    <property type="gene ID" value="AFUA_1G05940"/>
</dbReference>
<dbReference type="GeneID" id="3507603"/>
<dbReference type="KEGG" id="afm:AFUA_1G05940"/>
<dbReference type="VEuPathDB" id="FungiDB:Afu1g05940"/>
<dbReference type="eggNOG" id="KOG3046">
    <property type="taxonomic scope" value="Eukaryota"/>
</dbReference>
<dbReference type="HOGENOM" id="CLU_096169_0_0_1"/>
<dbReference type="InParanoid" id="Q4WJH6"/>
<dbReference type="OMA" id="QYQRAKM"/>
<dbReference type="OrthoDB" id="337270at2759"/>
<dbReference type="Proteomes" id="UP000002530">
    <property type="component" value="Chromosome 1"/>
</dbReference>
<dbReference type="GO" id="GO:0016592">
    <property type="term" value="C:mediator complex"/>
    <property type="evidence" value="ECO:0007669"/>
    <property type="project" value="InterPro"/>
</dbReference>
<dbReference type="GO" id="GO:0003712">
    <property type="term" value="F:transcription coregulator activity"/>
    <property type="evidence" value="ECO:0007669"/>
    <property type="project" value="InterPro"/>
</dbReference>
<dbReference type="GO" id="GO:0006357">
    <property type="term" value="P:regulation of transcription by RNA polymerase II"/>
    <property type="evidence" value="ECO:0007669"/>
    <property type="project" value="InterPro"/>
</dbReference>
<dbReference type="InterPro" id="IPR019145">
    <property type="entry name" value="Mediator_Med10"/>
</dbReference>
<dbReference type="Pfam" id="PF09748">
    <property type="entry name" value="Med10"/>
    <property type="match status" value="1"/>
</dbReference>
<proteinExistence type="inferred from homology"/>
<reference key="1">
    <citation type="journal article" date="2005" name="Nature">
        <title>Genomic sequence of the pathogenic and allergenic filamentous fungus Aspergillus fumigatus.</title>
        <authorList>
            <person name="Nierman W.C."/>
            <person name="Pain A."/>
            <person name="Anderson M.J."/>
            <person name="Wortman J.R."/>
            <person name="Kim H.S."/>
            <person name="Arroyo J."/>
            <person name="Berriman M."/>
            <person name="Abe K."/>
            <person name="Archer D.B."/>
            <person name="Bermejo C."/>
            <person name="Bennett J.W."/>
            <person name="Bowyer P."/>
            <person name="Chen D."/>
            <person name="Collins M."/>
            <person name="Coulsen R."/>
            <person name="Davies R."/>
            <person name="Dyer P.S."/>
            <person name="Farman M.L."/>
            <person name="Fedorova N."/>
            <person name="Fedorova N.D."/>
            <person name="Feldblyum T.V."/>
            <person name="Fischer R."/>
            <person name="Fosker N."/>
            <person name="Fraser A."/>
            <person name="Garcia J.L."/>
            <person name="Garcia M.J."/>
            <person name="Goble A."/>
            <person name="Goldman G.H."/>
            <person name="Gomi K."/>
            <person name="Griffith-Jones S."/>
            <person name="Gwilliam R."/>
            <person name="Haas B.J."/>
            <person name="Haas H."/>
            <person name="Harris D.E."/>
            <person name="Horiuchi H."/>
            <person name="Huang J."/>
            <person name="Humphray S."/>
            <person name="Jimenez J."/>
            <person name="Keller N."/>
            <person name="Khouri H."/>
            <person name="Kitamoto K."/>
            <person name="Kobayashi T."/>
            <person name="Konzack S."/>
            <person name="Kulkarni R."/>
            <person name="Kumagai T."/>
            <person name="Lafton A."/>
            <person name="Latge J.-P."/>
            <person name="Li W."/>
            <person name="Lord A."/>
            <person name="Lu C."/>
            <person name="Majoros W.H."/>
            <person name="May G.S."/>
            <person name="Miller B.L."/>
            <person name="Mohamoud Y."/>
            <person name="Molina M."/>
            <person name="Monod M."/>
            <person name="Mouyna I."/>
            <person name="Mulligan S."/>
            <person name="Murphy L.D."/>
            <person name="O'Neil S."/>
            <person name="Paulsen I."/>
            <person name="Penalva M.A."/>
            <person name="Pertea M."/>
            <person name="Price C."/>
            <person name="Pritchard B.L."/>
            <person name="Quail M.A."/>
            <person name="Rabbinowitsch E."/>
            <person name="Rawlins N."/>
            <person name="Rajandream M.A."/>
            <person name="Reichard U."/>
            <person name="Renauld H."/>
            <person name="Robson G.D."/>
            <person name="Rodriguez de Cordoba S."/>
            <person name="Rodriguez-Pena J.M."/>
            <person name="Ronning C.M."/>
            <person name="Rutter S."/>
            <person name="Salzberg S.L."/>
            <person name="Sanchez M."/>
            <person name="Sanchez-Ferrero J.C."/>
            <person name="Saunders D."/>
            <person name="Seeger K."/>
            <person name="Squares R."/>
            <person name="Squares S."/>
            <person name="Takeuchi M."/>
            <person name="Tekaia F."/>
            <person name="Turner G."/>
            <person name="Vazquez de Aldana C.R."/>
            <person name="Weidman J."/>
            <person name="White O."/>
            <person name="Woodward J.R."/>
            <person name="Yu J.-H."/>
            <person name="Fraser C.M."/>
            <person name="Galagan J.E."/>
            <person name="Asai K."/>
            <person name="Machida M."/>
            <person name="Hall N."/>
            <person name="Barrell B.G."/>
            <person name="Denning D.W."/>
        </authorList>
    </citation>
    <scope>NUCLEOTIDE SEQUENCE [LARGE SCALE GENOMIC DNA]</scope>
    <source>
        <strain>ATCC MYA-4609 / CBS 101355 / FGSC A1100 / Af293</strain>
    </source>
</reference>
<name>MED10_ASPFU</name>
<accession>Q4WJH6</accession>
<gene>
    <name type="primary">nut2</name>
    <name type="synonym">med10</name>
    <name type="ORF">AFUA_1G05940</name>
</gene>
<keyword id="KW-0010">Activator</keyword>
<keyword id="KW-0539">Nucleus</keyword>
<keyword id="KW-1185">Reference proteome</keyword>
<keyword id="KW-0804">Transcription</keyword>
<keyword id="KW-0805">Transcription regulation</keyword>
<evidence type="ECO:0000250" key="1"/>
<evidence type="ECO:0000256" key="2">
    <source>
        <dbReference type="SAM" id="MobiDB-lite"/>
    </source>
</evidence>
<evidence type="ECO:0000305" key="3"/>
<protein>
    <recommendedName>
        <fullName>Mediator of RNA polymerase II transcription subunit 10</fullName>
    </recommendedName>
    <alternativeName>
        <fullName>Mediator complex subunit 10</fullName>
    </alternativeName>
</protein>